<organism>
    <name type="scientific">Ascaris suum</name>
    <name type="common">Pig roundworm</name>
    <name type="synonym">Ascaris lumbricoides</name>
    <dbReference type="NCBI Taxonomy" id="6253"/>
    <lineage>
        <taxon>Eukaryota</taxon>
        <taxon>Metazoa</taxon>
        <taxon>Ecdysozoa</taxon>
        <taxon>Nematoda</taxon>
        <taxon>Chromadorea</taxon>
        <taxon>Rhabditida</taxon>
        <taxon>Spirurina</taxon>
        <taxon>Ascaridomorpha</taxon>
        <taxon>Ascaridoidea</taxon>
        <taxon>Ascarididae</taxon>
        <taxon>Ascaris</taxon>
    </lineage>
</organism>
<evidence type="ECO:0000250" key="1"/>
<evidence type="ECO:0000269" key="2">
    <source>
    </source>
</evidence>
<evidence type="ECO:0000269" key="3">
    <source>
    </source>
</evidence>
<evidence type="ECO:0000305" key="4"/>
<name>DCPS_ASCSU</name>
<dbReference type="EC" id="3.6.1.59" evidence="2 3"/>
<dbReference type="EMBL" id="GU350725">
    <property type="protein sequence ID" value="ADB92583.1"/>
    <property type="molecule type" value="mRNA"/>
</dbReference>
<dbReference type="SMR" id="D3K0N9"/>
<dbReference type="KEGG" id="ag:ADB92583"/>
<dbReference type="GO" id="GO:0005634">
    <property type="term" value="C:nucleus"/>
    <property type="evidence" value="ECO:0000250"/>
    <property type="project" value="UniProtKB"/>
</dbReference>
<dbReference type="GO" id="GO:0000932">
    <property type="term" value="C:P-body"/>
    <property type="evidence" value="ECO:0007669"/>
    <property type="project" value="TreeGrafter"/>
</dbReference>
<dbReference type="GO" id="GO:0140932">
    <property type="term" value="F:5'-(N(7)-methyl 5'-triphosphoguanosine)-[mRNA] diphosphatase activity"/>
    <property type="evidence" value="ECO:0000314"/>
    <property type="project" value="WormBase"/>
</dbReference>
<dbReference type="GO" id="GO:0000340">
    <property type="term" value="F:RNA 7-methylguanosine cap binding"/>
    <property type="evidence" value="ECO:0000314"/>
    <property type="project" value="UniProtKB"/>
</dbReference>
<dbReference type="GO" id="GO:0000290">
    <property type="term" value="P:deadenylation-dependent decapping of nuclear-transcribed mRNA"/>
    <property type="evidence" value="ECO:0007669"/>
    <property type="project" value="InterPro"/>
</dbReference>
<dbReference type="GO" id="GO:0110156">
    <property type="term" value="P:mRNA methylguanosine-cap decapping"/>
    <property type="evidence" value="ECO:0000314"/>
    <property type="project" value="WormBase"/>
</dbReference>
<dbReference type="GO" id="GO:0000288">
    <property type="term" value="P:nuclear-transcribed mRNA catabolic process, deadenylation-dependent decay"/>
    <property type="evidence" value="ECO:0000304"/>
    <property type="project" value="UniProtKB"/>
</dbReference>
<dbReference type="GO" id="GO:0009408">
    <property type="term" value="P:response to heat"/>
    <property type="evidence" value="ECO:0000250"/>
    <property type="project" value="UniProtKB"/>
</dbReference>
<dbReference type="FunFam" id="3.30.200.40:FF:000003">
    <property type="entry name" value="m7GpppX diphosphatase"/>
    <property type="match status" value="1"/>
</dbReference>
<dbReference type="FunFam" id="3.30.428.10:FF:000006">
    <property type="entry name" value="m7GpppX diphosphatase"/>
    <property type="match status" value="1"/>
</dbReference>
<dbReference type="Gene3D" id="3.30.428.10">
    <property type="entry name" value="HIT-like"/>
    <property type="match status" value="1"/>
</dbReference>
<dbReference type="Gene3D" id="3.30.200.40">
    <property type="entry name" value="Scavenger mRNA decapping enzyme, N-terminal domain"/>
    <property type="match status" value="1"/>
</dbReference>
<dbReference type="InterPro" id="IPR008594">
    <property type="entry name" value="DcpS/DCS2"/>
</dbReference>
<dbReference type="InterPro" id="IPR036265">
    <property type="entry name" value="HIT-like_sf"/>
</dbReference>
<dbReference type="InterPro" id="IPR011145">
    <property type="entry name" value="Scavenger_mRNA_decap_enz_N"/>
</dbReference>
<dbReference type="PANTHER" id="PTHR12978">
    <property type="entry name" value="HISTIDINE TRIAD HIT PROTEIN MEMBER"/>
    <property type="match status" value="1"/>
</dbReference>
<dbReference type="PANTHER" id="PTHR12978:SF0">
    <property type="entry name" value="M7GPPPX DIPHOSPHATASE"/>
    <property type="match status" value="1"/>
</dbReference>
<dbReference type="Pfam" id="PF05652">
    <property type="entry name" value="DcpS"/>
    <property type="match status" value="1"/>
</dbReference>
<dbReference type="Pfam" id="PF11969">
    <property type="entry name" value="DcpS_C"/>
    <property type="match status" value="1"/>
</dbReference>
<dbReference type="PIRSF" id="PIRSF028973">
    <property type="entry name" value="Scavenger_mRNA_decap_enz"/>
    <property type="match status" value="1"/>
</dbReference>
<dbReference type="SUPFAM" id="SSF54197">
    <property type="entry name" value="HIT-like"/>
    <property type="match status" value="1"/>
</dbReference>
<dbReference type="SUPFAM" id="SSF102860">
    <property type="entry name" value="mRNA decapping enzyme DcpS N-terminal domain"/>
    <property type="match status" value="1"/>
</dbReference>
<feature type="chain" id="PRO_0000420575" description="m7GpppX diphosphatase">
    <location>
        <begin position="1"/>
        <end position="301"/>
    </location>
</feature>
<feature type="short sequence motif" description="Histidine triad motif" evidence="1">
    <location>
        <begin position="244"/>
        <end position="248"/>
    </location>
</feature>
<feature type="active site" description="Nucleophile" evidence="1">
    <location>
        <position position="246"/>
    </location>
</feature>
<feature type="binding site" evidence="1">
    <location>
        <position position="154"/>
    </location>
    <ligand>
        <name>substrate</name>
    </ligand>
</feature>
<feature type="binding site" evidence="1">
    <location>
        <position position="176"/>
    </location>
    <ligand>
        <name>substrate</name>
    </ligand>
</feature>
<feature type="binding site" evidence="1">
    <location>
        <begin position="237"/>
        <end position="248"/>
    </location>
    <ligand>
        <name>substrate</name>
    </ligand>
</feature>
<protein>
    <recommendedName>
        <fullName>m7GpppX diphosphatase</fullName>
        <ecNumber evidence="2 3">3.6.1.59</ecNumber>
    </recommendedName>
    <alternativeName>
        <fullName>Decapping scavenger enzyme</fullName>
    </alternativeName>
    <alternativeName>
        <fullName>Scavenger mRNA-decapping enzyme DcpS</fullName>
    </alternativeName>
</protein>
<reference key="1">
    <citation type="submission" date="2009-12" db="EMBL/GenBank/DDBJ databases">
        <title>Ascaris DcpS activity on m7G and m2,2,7G mRNA cap.</title>
        <authorList>
            <person name="Davis R.E."/>
            <person name="McFarland C."/>
        </authorList>
    </citation>
    <scope>NUCLEOTIDE SEQUENCE [MRNA]</scope>
</reference>
<reference key="2">
    <citation type="journal article" date="2004" name="RNA">
        <title>Nematode m7GpppG and m3(2,2,7)GpppG decapping: activities in Ascaris embryos and characterization of C. elegans scavenger DcpS.</title>
        <authorList>
            <person name="Cohen L.S."/>
            <person name="Mikhli C."/>
            <person name="Friedman C."/>
            <person name="Jankowska-Anyszka M."/>
            <person name="Stepinski J."/>
            <person name="Darzynkiewicz E."/>
            <person name="Davis R.E."/>
        </authorList>
    </citation>
    <scope>FUNCTION</scope>
    <scope>CATALYTIC ACTIVITY</scope>
    <scope>SUBSTRATE SPECIFICITY</scope>
</reference>
<reference key="3">
    <citation type="journal article" date="2012" name="Biochemistry">
        <title>7-Methylguanosine diphosphate (m(7)GDP) is not hydrolyzed but strongly bound by decapping scavenger (dcpS) enzymes and potently inhibits their activity.</title>
        <authorList>
            <person name="Wypijewska A."/>
            <person name="Bojarska E."/>
            <person name="Lukaszewicz M."/>
            <person name="Stepinski J."/>
            <person name="Jemielity J."/>
            <person name="Davis R.E."/>
            <person name="Darzynkiewicz E."/>
        </authorList>
    </citation>
    <scope>FUNCTION</scope>
    <scope>CATALYTIC ACTIVITY</scope>
    <scope>SUBSTRATE SPECIFICITY</scope>
    <scope>ACTIVITY REGULATION</scope>
</reference>
<accession>D3K0N9</accession>
<comment type="function">
    <text evidence="2 3">Decapping scavenger enzyme that catalyzes the cleavage of a residual cap structure following the degradation of mRNAs of the 3'-&gt;5' exosome-mediated mRNA decay pathway. Hydrolyzes cap analog structures like 7-methylguanosine nucleoside triphosphate (m7GpppG) and tri-methyl guanosine nucleoside triphosphate (m3(2,2,7)GpppG) with up to 2 nucleotide substrates (small capped oligoribonucleotides) and specifically releases 5'-phosphorylated RNA fragments and 7-methylguanosine monophosphate (m7GMP). Does not hydrolyze unmethylated cap analog (GpppG) and shows no decapping activity on intact m7GpppG-capped mRNA molecules. Does not hydrolyze 7-methylguanosine diphosphate (m7GDP) and tri-methylguanosine diphosphate (m3(2,2,7)GDP) to m(7)GMP and m3(2,2,7)GMP, respectively (PubMed:15383679, PubMed:22985415). May also play a role in the 5'-&gt;3 mRNA decay pathway; m7GDP, the downstream product released by the 5'-&gt;3' mRNA mediated decapping activity, may be also converted by dcs-1 to m7GMP. Binds to m7GpppG and strongly to m7GDP.</text>
</comment>
<comment type="catalytic activity">
    <reaction evidence="3">
        <text>a 5'-end (N(7)-methyl 5'-triphosphoguanosine)-ribonucleoside in mRNA + H2O = N(7)-methyl-GMP + a 5'-end diphospho-ribonucleoside in mRNA + 2 H(+)</text>
        <dbReference type="Rhea" id="RHEA:65388"/>
        <dbReference type="Rhea" id="RHEA-COMP:17165"/>
        <dbReference type="Rhea" id="RHEA-COMP:17167"/>
        <dbReference type="ChEBI" id="CHEBI:15377"/>
        <dbReference type="ChEBI" id="CHEBI:15378"/>
        <dbReference type="ChEBI" id="CHEBI:58285"/>
        <dbReference type="ChEBI" id="CHEBI:156461"/>
        <dbReference type="ChEBI" id="CHEBI:167616"/>
        <dbReference type="EC" id="3.6.1.59"/>
    </reaction>
</comment>
<comment type="catalytic activity">
    <reaction evidence="2 3">
        <text>a 5'-end (N(2),N(2),N(7)-trimethyl 5'-triphosphoguanosine)-ribonucleoside in mRNA + H2O = (N(2),N(2),N(7))-trimethyl-GMP + a 5'-end diphospho-ribonucleoside in mRNA + 2 H(+)</text>
        <dbReference type="Rhea" id="RHEA:65384"/>
        <dbReference type="Rhea" id="RHEA-COMP:17165"/>
        <dbReference type="Rhea" id="RHEA-COMP:17171"/>
        <dbReference type="ChEBI" id="CHEBI:15377"/>
        <dbReference type="ChEBI" id="CHEBI:15378"/>
        <dbReference type="ChEBI" id="CHEBI:74434"/>
        <dbReference type="ChEBI" id="CHEBI:167616"/>
        <dbReference type="ChEBI" id="CHEBI:167623"/>
        <dbReference type="EC" id="3.6.1.59"/>
    </reaction>
</comment>
<comment type="activity regulation">
    <text evidence="3">The hydrolytic product 7-methylguanosine diphosphate (m7GDP) efficiently inhibits the decapping scavenger activity and acts as a competitive inhibitor in vitro.</text>
</comment>
<comment type="subcellular location">
    <subcellularLocation>
        <location evidence="1">Nucleus</location>
    </subcellularLocation>
</comment>
<comment type="similarity">
    <text evidence="4">Belongs to the HIT family.</text>
</comment>
<sequence length="301" mass="34565">MVDEVDANSTGDNSLVNMKGFSFKEVLGSDSARKSAFILLDSSNGENAILLADKNAFPVDKTSWSAILTGSTLKPIMKNDIYSSYTLCMPNEFSDVKSTLIYPCNEKHIAKYRDQKRFIINETPEDYRTITLPYIQRNQMSLEWVYNILDHKAEVDRIIYEETDPHDGFILAPDLKWSGEQLECLYVQALVRRKGIKSIRDLTANDLPLLEGIRDKGLNAIKEKYGLDKHQIRAYFHYQPSFYHLHVHFIHVSYEAPASGVAKAVLLDDVINNLKLIPDFYQRSTLTFTAKEQDPIYRREN</sequence>
<keyword id="KW-0378">Hydrolase</keyword>
<keyword id="KW-0539">Nucleus</keyword>
<proteinExistence type="evidence at protein level"/>